<proteinExistence type="inferred from homology"/>
<name>ATPD_DICDI</name>
<sequence length="170" mass="18508">MIRSIIKSSNNLLKSNVAINSNKRFFATEASATSDLLTFSLLSPHQTIYKDKKAQLVTLPGAKGIFGVAKNHVPRIAELKPGVIQINHENGDLEKFFISGGFAFVNPDASCYINTIEAVPIDQLDAEEVKNGLARYTQLYNDAQEENAKAVALIGLETYQQMAFACGVSA</sequence>
<gene>
    <name evidence="3" type="primary">atp5f1d</name>
    <name type="synonym">atp16</name>
    <name type="synonym">atp5D</name>
    <name type="ORF">DDB_G0269038</name>
</gene>
<reference key="1">
    <citation type="journal article" date="2005" name="Nature">
        <title>The genome of the social amoeba Dictyostelium discoideum.</title>
        <authorList>
            <person name="Eichinger L."/>
            <person name="Pachebat J.A."/>
            <person name="Gloeckner G."/>
            <person name="Rajandream M.A."/>
            <person name="Sucgang R."/>
            <person name="Berriman M."/>
            <person name="Song J."/>
            <person name="Olsen R."/>
            <person name="Szafranski K."/>
            <person name="Xu Q."/>
            <person name="Tunggal B."/>
            <person name="Kummerfeld S."/>
            <person name="Madera M."/>
            <person name="Konfortov B.A."/>
            <person name="Rivero F."/>
            <person name="Bankier A.T."/>
            <person name="Lehmann R."/>
            <person name="Hamlin N."/>
            <person name="Davies R."/>
            <person name="Gaudet P."/>
            <person name="Fey P."/>
            <person name="Pilcher K."/>
            <person name="Chen G."/>
            <person name="Saunders D."/>
            <person name="Sodergren E.J."/>
            <person name="Davis P."/>
            <person name="Kerhornou A."/>
            <person name="Nie X."/>
            <person name="Hall N."/>
            <person name="Anjard C."/>
            <person name="Hemphill L."/>
            <person name="Bason N."/>
            <person name="Farbrother P."/>
            <person name="Desany B."/>
            <person name="Just E."/>
            <person name="Morio T."/>
            <person name="Rost R."/>
            <person name="Churcher C.M."/>
            <person name="Cooper J."/>
            <person name="Haydock S."/>
            <person name="van Driessche N."/>
            <person name="Cronin A."/>
            <person name="Goodhead I."/>
            <person name="Muzny D.M."/>
            <person name="Mourier T."/>
            <person name="Pain A."/>
            <person name="Lu M."/>
            <person name="Harper D."/>
            <person name="Lindsay R."/>
            <person name="Hauser H."/>
            <person name="James K.D."/>
            <person name="Quiles M."/>
            <person name="Madan Babu M."/>
            <person name="Saito T."/>
            <person name="Buchrieser C."/>
            <person name="Wardroper A."/>
            <person name="Felder M."/>
            <person name="Thangavelu M."/>
            <person name="Johnson D."/>
            <person name="Knights A."/>
            <person name="Loulseged H."/>
            <person name="Mungall K.L."/>
            <person name="Oliver K."/>
            <person name="Price C."/>
            <person name="Quail M.A."/>
            <person name="Urushihara H."/>
            <person name="Hernandez J."/>
            <person name="Rabbinowitsch E."/>
            <person name="Steffen D."/>
            <person name="Sanders M."/>
            <person name="Ma J."/>
            <person name="Kohara Y."/>
            <person name="Sharp S."/>
            <person name="Simmonds M.N."/>
            <person name="Spiegler S."/>
            <person name="Tivey A."/>
            <person name="Sugano S."/>
            <person name="White B."/>
            <person name="Walker D."/>
            <person name="Woodward J.R."/>
            <person name="Winckler T."/>
            <person name="Tanaka Y."/>
            <person name="Shaulsky G."/>
            <person name="Schleicher M."/>
            <person name="Weinstock G.M."/>
            <person name="Rosenthal A."/>
            <person name="Cox E.C."/>
            <person name="Chisholm R.L."/>
            <person name="Gibbs R.A."/>
            <person name="Loomis W.F."/>
            <person name="Platzer M."/>
            <person name="Kay R.R."/>
            <person name="Williams J.G."/>
            <person name="Dear P.H."/>
            <person name="Noegel A.A."/>
            <person name="Barrell B.G."/>
            <person name="Kuspa A."/>
        </authorList>
    </citation>
    <scope>NUCLEOTIDE SEQUENCE [LARGE SCALE GENOMIC DNA]</scope>
    <source>
        <strain>AX4</strain>
    </source>
</reference>
<accession>Q55F42</accession>
<dbReference type="EMBL" id="AAFI02000004">
    <property type="protein sequence ID" value="EAL73108.1"/>
    <property type="molecule type" value="Genomic_DNA"/>
</dbReference>
<dbReference type="RefSeq" id="XP_646828.1">
    <property type="nucleotide sequence ID" value="XM_641736.1"/>
</dbReference>
<dbReference type="SMR" id="Q55F42"/>
<dbReference type="FunCoup" id="Q55F42">
    <property type="interactions" value="504"/>
</dbReference>
<dbReference type="STRING" id="44689.Q55F42"/>
<dbReference type="PaxDb" id="44689-DDB0238330"/>
<dbReference type="EnsemblProtists" id="EAL73108">
    <property type="protein sequence ID" value="EAL73108"/>
    <property type="gene ID" value="DDB_G0269038"/>
</dbReference>
<dbReference type="GeneID" id="8616511"/>
<dbReference type="KEGG" id="ddi:DDB_G0269038"/>
<dbReference type="dictyBase" id="DDB_G0269038">
    <property type="gene designation" value="atp5D"/>
</dbReference>
<dbReference type="VEuPathDB" id="AmoebaDB:DDB_G0269038"/>
<dbReference type="eggNOG" id="KOG1758">
    <property type="taxonomic scope" value="Eukaryota"/>
</dbReference>
<dbReference type="HOGENOM" id="CLU_084338_0_0_1"/>
<dbReference type="InParanoid" id="Q55F42"/>
<dbReference type="OMA" id="PHQTIYR"/>
<dbReference type="PhylomeDB" id="Q55F42"/>
<dbReference type="PRO" id="PR:Q55F42"/>
<dbReference type="Proteomes" id="UP000002195">
    <property type="component" value="Chromosome 1"/>
</dbReference>
<dbReference type="GO" id="GO:0005743">
    <property type="term" value="C:mitochondrial inner membrane"/>
    <property type="evidence" value="ECO:0007669"/>
    <property type="project" value="UniProtKB-SubCell"/>
</dbReference>
<dbReference type="GO" id="GO:0045259">
    <property type="term" value="C:proton-transporting ATP synthase complex"/>
    <property type="evidence" value="ECO:0000250"/>
    <property type="project" value="dictyBase"/>
</dbReference>
<dbReference type="GO" id="GO:0046933">
    <property type="term" value="F:proton-transporting ATP synthase activity, rotational mechanism"/>
    <property type="evidence" value="ECO:0000250"/>
    <property type="project" value="dictyBase"/>
</dbReference>
<dbReference type="GO" id="GO:0015986">
    <property type="term" value="P:proton motive force-driven ATP synthesis"/>
    <property type="evidence" value="ECO:0000250"/>
    <property type="project" value="dictyBase"/>
</dbReference>
<dbReference type="CDD" id="cd12152">
    <property type="entry name" value="F1-ATPase_delta"/>
    <property type="match status" value="1"/>
</dbReference>
<dbReference type="FunFam" id="2.60.15.10:FF:000016">
    <property type="entry name" value="Mitochondrial F1F0 ATP synthase, delta subunit"/>
    <property type="match status" value="1"/>
</dbReference>
<dbReference type="Gene3D" id="2.60.15.10">
    <property type="entry name" value="F0F1 ATP synthase delta/epsilon subunit, N-terminal"/>
    <property type="match status" value="1"/>
</dbReference>
<dbReference type="HAMAP" id="MF_00530">
    <property type="entry name" value="ATP_synth_epsil_bac"/>
    <property type="match status" value="1"/>
</dbReference>
<dbReference type="InterPro" id="IPR001469">
    <property type="entry name" value="ATP_synth_F1_dsu/esu"/>
</dbReference>
<dbReference type="InterPro" id="IPR020546">
    <property type="entry name" value="ATP_synth_F1_dsu/esu_N"/>
</dbReference>
<dbReference type="InterPro" id="IPR036771">
    <property type="entry name" value="ATPsynth_dsu/esu_N"/>
</dbReference>
<dbReference type="PANTHER" id="PTHR13822">
    <property type="entry name" value="ATP SYNTHASE DELTA/EPSILON CHAIN"/>
    <property type="match status" value="1"/>
</dbReference>
<dbReference type="PANTHER" id="PTHR13822:SF7">
    <property type="entry name" value="ATP SYNTHASE SUBUNIT DELTA, MITOCHONDRIAL"/>
    <property type="match status" value="1"/>
</dbReference>
<dbReference type="Pfam" id="PF02823">
    <property type="entry name" value="ATP-synt_DE_N"/>
    <property type="match status" value="1"/>
</dbReference>
<dbReference type="SUPFAM" id="SSF51344">
    <property type="entry name" value="Epsilon subunit of F1F0-ATP synthase N-terminal domain"/>
    <property type="match status" value="1"/>
</dbReference>
<organism>
    <name type="scientific">Dictyostelium discoideum</name>
    <name type="common">Social amoeba</name>
    <dbReference type="NCBI Taxonomy" id="44689"/>
    <lineage>
        <taxon>Eukaryota</taxon>
        <taxon>Amoebozoa</taxon>
        <taxon>Evosea</taxon>
        <taxon>Eumycetozoa</taxon>
        <taxon>Dictyostelia</taxon>
        <taxon>Dictyosteliales</taxon>
        <taxon>Dictyosteliaceae</taxon>
        <taxon>Dictyostelium</taxon>
    </lineage>
</organism>
<keyword id="KW-0375">Hydrogen ion transport</keyword>
<keyword id="KW-0406">Ion transport</keyword>
<keyword id="KW-0472">Membrane</keyword>
<keyword id="KW-0496">Mitochondrion</keyword>
<keyword id="KW-0999">Mitochondrion inner membrane</keyword>
<keyword id="KW-1185">Reference proteome</keyword>
<keyword id="KW-0809">Transit peptide</keyword>
<keyword id="KW-0813">Transport</keyword>
<comment type="function">
    <text evidence="2 3">Subunit delta, of the mitochondrial membrane ATP synthase complex (F(1)F(0) ATP synthase or Complex V) that produces ATP from ADP in the presence of a proton gradient across the membrane which is generated by electron transport complexes of the respiratory chain. ATP synthase complex consist of a soluble F(1) head domain - the catalytic core - and a membrane F(1) domain - the membrane proton channel. These two domains are linked by a central stalk rotating inside the F(1) region and a stationary peripheral stalk. During catalysis, ATP synthesis in the catalytic domain of F(1) is coupled via a rotary mechanism of the central stalk subunits to proton translocation (By similarity). In vivo, can only synthesize ATP although its ATP hydrolase activity can be activated artificially in vitro (By similarity). With the central stalk subunit gamma, is essential for the biogenesis of F(1) catalytic part of the ATP synthase complex namely in the formation of F1 assembly intermediate (By similarity).</text>
</comment>
<comment type="subunit">
    <text evidence="3">Component of the ATP synthase complex composed at least of ATP5F1A/subunit alpha, ATP5F1B/subunit beta, ATP5MC1/subunit c (homooctomer), MT-ATP6/subunit a, MT-ATP8/subunit 8, ATP5ME/subunit e, ATP5MF/subunit f, ATP5MG/subunit g, ATP5MK/subunit k, ATP5MJ/subunit j, ATP5F1C/subunit gamma, ATP5F1D/subunit delta, ATP5F1E/subunit epsilon, ATP5PF/subunit F6, ATP5PB/subunit b, ATP5PD/subunit d, ATP5PO/subunit OSCP. ATP synthase complex consists of a soluble F(1) head domain (subunits alpha(3) and beta(3)) - the catalytic core - and a membrane F(0) domain - the membrane proton channel (subunits c, a, 8, e, f, g, k and j). These two domains are linked by a central stalk (subunits gamma, delta, and epsilon) rotating inside the F1 region and a stationary peripheral stalk (subunits F6, b, d, and OSCP).</text>
</comment>
<comment type="subcellular location">
    <subcellularLocation>
        <location>Mitochondrion</location>
    </subcellularLocation>
    <subcellularLocation>
        <location evidence="1">Mitochondrion inner membrane</location>
    </subcellularLocation>
</comment>
<comment type="similarity">
    <text evidence="5">Belongs to the ATPase epsilon chain family.</text>
</comment>
<protein>
    <recommendedName>
        <fullName evidence="3">ATP synthase F(1) complex subunit delta, mitochondrial</fullName>
    </recommendedName>
    <alternativeName>
        <fullName evidence="3">ATP synthase F1 subunit delta</fullName>
    </alternativeName>
    <alternativeName>
        <fullName>F-ATPase delta subunit</fullName>
    </alternativeName>
</protein>
<feature type="transit peptide" description="Mitochondrion" evidence="4">
    <location>
        <begin position="1"/>
        <end position="33"/>
    </location>
</feature>
<feature type="chain" id="PRO_0000328055" description="ATP synthase F(1) complex subunit delta, mitochondrial">
    <location>
        <begin position="34"/>
        <end position="170"/>
    </location>
</feature>
<evidence type="ECO:0000250" key="1"/>
<evidence type="ECO:0000250" key="2">
    <source>
        <dbReference type="UniProtKB" id="P19483"/>
    </source>
</evidence>
<evidence type="ECO:0000250" key="3">
    <source>
        <dbReference type="UniProtKB" id="P30049"/>
    </source>
</evidence>
<evidence type="ECO:0000255" key="4"/>
<evidence type="ECO:0000305" key="5"/>